<comment type="function">
    <text evidence="1">Catalyzes the transfer of an acyl group from acyl-phosphate (acyl-PO(4)) to glycerol-3-phosphate (G3P) to form lysophosphatidic acid (LPA). This enzyme utilizes acyl-phosphate as fatty acyl donor, but not acyl-CoA or acyl-ACP.</text>
</comment>
<comment type="catalytic activity">
    <reaction evidence="1">
        <text>an acyl phosphate + sn-glycerol 3-phosphate = a 1-acyl-sn-glycero-3-phosphate + phosphate</text>
        <dbReference type="Rhea" id="RHEA:34075"/>
        <dbReference type="ChEBI" id="CHEBI:43474"/>
        <dbReference type="ChEBI" id="CHEBI:57597"/>
        <dbReference type="ChEBI" id="CHEBI:57970"/>
        <dbReference type="ChEBI" id="CHEBI:59918"/>
        <dbReference type="EC" id="2.3.1.275"/>
    </reaction>
</comment>
<comment type="pathway">
    <text evidence="1">Lipid metabolism; phospholipid metabolism.</text>
</comment>
<comment type="subunit">
    <text evidence="1">Probably interacts with PlsX.</text>
</comment>
<comment type="subcellular location">
    <subcellularLocation>
        <location evidence="1">Cell inner membrane</location>
        <topology evidence="1">Multi-pass membrane protein</topology>
    </subcellularLocation>
</comment>
<comment type="similarity">
    <text evidence="1">Belongs to the PlsY family.</text>
</comment>
<gene>
    <name evidence="1" type="primary">plsY</name>
    <name type="ordered locus">Glov_2952</name>
</gene>
<name>PLSY_TRIL1</name>
<dbReference type="EC" id="2.3.1.275" evidence="1"/>
<dbReference type="EMBL" id="CP001089">
    <property type="protein sequence ID" value="ACD96659.1"/>
    <property type="molecule type" value="Genomic_DNA"/>
</dbReference>
<dbReference type="RefSeq" id="WP_012470984.1">
    <property type="nucleotide sequence ID" value="NC_010814.1"/>
</dbReference>
<dbReference type="SMR" id="B3E8I3"/>
<dbReference type="STRING" id="398767.Glov_2952"/>
<dbReference type="KEGG" id="glo:Glov_2952"/>
<dbReference type="eggNOG" id="COG0344">
    <property type="taxonomic scope" value="Bacteria"/>
</dbReference>
<dbReference type="HOGENOM" id="CLU_081254_0_0_7"/>
<dbReference type="OrthoDB" id="9777124at2"/>
<dbReference type="UniPathway" id="UPA00085"/>
<dbReference type="Proteomes" id="UP000002420">
    <property type="component" value="Chromosome"/>
</dbReference>
<dbReference type="GO" id="GO:0005886">
    <property type="term" value="C:plasma membrane"/>
    <property type="evidence" value="ECO:0007669"/>
    <property type="project" value="UniProtKB-SubCell"/>
</dbReference>
<dbReference type="GO" id="GO:0043772">
    <property type="term" value="F:acyl-phosphate glycerol-3-phosphate acyltransferase activity"/>
    <property type="evidence" value="ECO:0007669"/>
    <property type="project" value="UniProtKB-UniRule"/>
</dbReference>
<dbReference type="GO" id="GO:0008654">
    <property type="term" value="P:phospholipid biosynthetic process"/>
    <property type="evidence" value="ECO:0007669"/>
    <property type="project" value="UniProtKB-UniRule"/>
</dbReference>
<dbReference type="HAMAP" id="MF_01043">
    <property type="entry name" value="PlsY"/>
    <property type="match status" value="1"/>
</dbReference>
<dbReference type="InterPro" id="IPR003811">
    <property type="entry name" value="G3P_acylTferase_PlsY"/>
</dbReference>
<dbReference type="NCBIfam" id="TIGR00023">
    <property type="entry name" value="glycerol-3-phosphate 1-O-acyltransferase PlsY"/>
    <property type="match status" value="1"/>
</dbReference>
<dbReference type="PANTHER" id="PTHR30309:SF0">
    <property type="entry name" value="GLYCEROL-3-PHOSPHATE ACYLTRANSFERASE-RELATED"/>
    <property type="match status" value="1"/>
</dbReference>
<dbReference type="PANTHER" id="PTHR30309">
    <property type="entry name" value="INNER MEMBRANE PROTEIN YGIH"/>
    <property type="match status" value="1"/>
</dbReference>
<dbReference type="Pfam" id="PF02660">
    <property type="entry name" value="G3P_acyltransf"/>
    <property type="match status" value="1"/>
</dbReference>
<dbReference type="SMART" id="SM01207">
    <property type="entry name" value="G3P_acyltransf"/>
    <property type="match status" value="1"/>
</dbReference>
<sequence>MTAGLFWIAGAYLLGSIPTGLLLGKLYGIDVRNEGSGNIGATNLYRTVGRKVGILTLTGDCLKGLLPVLLAWKLGHAEPMQAWVGLAAFCGHVFSVFLLFKGGKGVATALGVFLALAPLAVLGALAVFILLVAVWRYISLGSIMAAAVMPLIIFFRPHSPQLLIATVLIAAVVIIKHHSNISRLIAGTESKFKA</sequence>
<keyword id="KW-0997">Cell inner membrane</keyword>
<keyword id="KW-1003">Cell membrane</keyword>
<keyword id="KW-0444">Lipid biosynthesis</keyword>
<keyword id="KW-0443">Lipid metabolism</keyword>
<keyword id="KW-0472">Membrane</keyword>
<keyword id="KW-0594">Phospholipid biosynthesis</keyword>
<keyword id="KW-1208">Phospholipid metabolism</keyword>
<keyword id="KW-1185">Reference proteome</keyword>
<keyword id="KW-0808">Transferase</keyword>
<keyword id="KW-0812">Transmembrane</keyword>
<keyword id="KW-1133">Transmembrane helix</keyword>
<protein>
    <recommendedName>
        <fullName evidence="1">Glycerol-3-phosphate acyltransferase</fullName>
    </recommendedName>
    <alternativeName>
        <fullName evidence="1">Acyl-PO4 G3P acyltransferase</fullName>
    </alternativeName>
    <alternativeName>
        <fullName evidence="1">Acyl-phosphate--glycerol-3-phosphate acyltransferase</fullName>
    </alternativeName>
    <alternativeName>
        <fullName evidence="1">G3P acyltransferase</fullName>
        <shortName evidence="1">GPAT</shortName>
        <ecNumber evidence="1">2.3.1.275</ecNumber>
    </alternativeName>
    <alternativeName>
        <fullName evidence="1">Lysophosphatidic acid synthase</fullName>
        <shortName evidence="1">LPA synthase</shortName>
    </alternativeName>
</protein>
<proteinExistence type="inferred from homology"/>
<feature type="chain" id="PRO_1000136093" description="Glycerol-3-phosphate acyltransferase">
    <location>
        <begin position="1"/>
        <end position="194"/>
    </location>
</feature>
<feature type="transmembrane region" description="Helical" evidence="1">
    <location>
        <begin position="3"/>
        <end position="23"/>
    </location>
</feature>
<feature type="transmembrane region" description="Helical" evidence="1">
    <location>
        <begin position="52"/>
        <end position="72"/>
    </location>
</feature>
<feature type="transmembrane region" description="Helical" evidence="1">
    <location>
        <begin position="80"/>
        <end position="100"/>
    </location>
</feature>
<feature type="transmembrane region" description="Helical" evidence="1">
    <location>
        <begin position="112"/>
        <end position="132"/>
    </location>
</feature>
<feature type="transmembrane region" description="Helical" evidence="1">
    <location>
        <begin position="135"/>
        <end position="155"/>
    </location>
</feature>
<feature type="transmembrane region" description="Helical" evidence="1">
    <location>
        <begin position="162"/>
        <end position="182"/>
    </location>
</feature>
<accession>B3E8I3</accession>
<organism>
    <name type="scientific">Trichlorobacter lovleyi (strain ATCC BAA-1151 / DSM 17278 / SZ)</name>
    <name type="common">Geobacter lovleyi</name>
    <dbReference type="NCBI Taxonomy" id="398767"/>
    <lineage>
        <taxon>Bacteria</taxon>
        <taxon>Pseudomonadati</taxon>
        <taxon>Thermodesulfobacteriota</taxon>
        <taxon>Desulfuromonadia</taxon>
        <taxon>Geobacterales</taxon>
        <taxon>Geobacteraceae</taxon>
        <taxon>Trichlorobacter</taxon>
    </lineage>
</organism>
<reference key="1">
    <citation type="submission" date="2008-05" db="EMBL/GenBank/DDBJ databases">
        <title>Complete sequence of chromosome of Geobacter lovleyi SZ.</title>
        <authorList>
            <consortium name="US DOE Joint Genome Institute"/>
            <person name="Lucas S."/>
            <person name="Copeland A."/>
            <person name="Lapidus A."/>
            <person name="Glavina del Rio T."/>
            <person name="Dalin E."/>
            <person name="Tice H."/>
            <person name="Bruce D."/>
            <person name="Goodwin L."/>
            <person name="Pitluck S."/>
            <person name="Chertkov O."/>
            <person name="Meincke L."/>
            <person name="Brettin T."/>
            <person name="Detter J.C."/>
            <person name="Han C."/>
            <person name="Tapia R."/>
            <person name="Kuske C.R."/>
            <person name="Schmutz J."/>
            <person name="Larimer F."/>
            <person name="Land M."/>
            <person name="Hauser L."/>
            <person name="Kyrpides N."/>
            <person name="Mikhailova N."/>
            <person name="Sung Y."/>
            <person name="Fletcher K.E."/>
            <person name="Ritalahti K.M."/>
            <person name="Loeffler F.E."/>
            <person name="Richardson P."/>
        </authorList>
    </citation>
    <scope>NUCLEOTIDE SEQUENCE [LARGE SCALE GENOMIC DNA]</scope>
    <source>
        <strain>ATCC BAA-1151 / DSM 17278 / SZ</strain>
    </source>
</reference>
<evidence type="ECO:0000255" key="1">
    <source>
        <dbReference type="HAMAP-Rule" id="MF_01043"/>
    </source>
</evidence>